<organism>
    <name type="scientific">Shewanella denitrificans (strain OS217 / ATCC BAA-1090 / DSM 15013)</name>
    <dbReference type="NCBI Taxonomy" id="318161"/>
    <lineage>
        <taxon>Bacteria</taxon>
        <taxon>Pseudomonadati</taxon>
        <taxon>Pseudomonadota</taxon>
        <taxon>Gammaproteobacteria</taxon>
        <taxon>Alteromonadales</taxon>
        <taxon>Shewanellaceae</taxon>
        <taxon>Shewanella</taxon>
    </lineage>
</organism>
<protein>
    <recommendedName>
        <fullName evidence="1">Thymidine phosphorylase</fullName>
        <ecNumber evidence="1">2.4.2.4</ecNumber>
    </recommendedName>
    <alternativeName>
        <fullName evidence="1">TdRPase</fullName>
    </alternativeName>
</protein>
<comment type="function">
    <text evidence="1">The enzymes which catalyze the reversible phosphorolysis of pyrimidine nucleosides are involved in the degradation of these compounds and in their utilization as carbon and energy sources, or in the rescue of pyrimidine bases for nucleotide synthesis.</text>
</comment>
<comment type="catalytic activity">
    <reaction evidence="1">
        <text>thymidine + phosphate = 2-deoxy-alpha-D-ribose 1-phosphate + thymine</text>
        <dbReference type="Rhea" id="RHEA:16037"/>
        <dbReference type="ChEBI" id="CHEBI:17748"/>
        <dbReference type="ChEBI" id="CHEBI:17821"/>
        <dbReference type="ChEBI" id="CHEBI:43474"/>
        <dbReference type="ChEBI" id="CHEBI:57259"/>
        <dbReference type="EC" id="2.4.2.4"/>
    </reaction>
</comment>
<comment type="pathway">
    <text evidence="1">Pyrimidine metabolism; dTMP biosynthesis via salvage pathway; dTMP from thymine: step 1/2.</text>
</comment>
<comment type="subunit">
    <text evidence="1">Homodimer.</text>
</comment>
<comment type="similarity">
    <text evidence="1">Belongs to the thymidine/pyrimidine-nucleoside phosphorylase family.</text>
</comment>
<name>TYPH_SHEDO</name>
<keyword id="KW-0328">Glycosyltransferase</keyword>
<keyword id="KW-1185">Reference proteome</keyword>
<keyword id="KW-0808">Transferase</keyword>
<dbReference type="EC" id="2.4.2.4" evidence="1"/>
<dbReference type="EMBL" id="CP000302">
    <property type="protein sequence ID" value="ABE54314.1"/>
    <property type="molecule type" value="Genomic_DNA"/>
</dbReference>
<dbReference type="RefSeq" id="WP_011495478.1">
    <property type="nucleotide sequence ID" value="NC_007954.1"/>
</dbReference>
<dbReference type="SMR" id="Q12QG2"/>
<dbReference type="STRING" id="318161.Sden_1026"/>
<dbReference type="KEGG" id="sdn:Sden_1026"/>
<dbReference type="eggNOG" id="COG0213">
    <property type="taxonomic scope" value="Bacteria"/>
</dbReference>
<dbReference type="HOGENOM" id="CLU_025040_0_1_6"/>
<dbReference type="OrthoDB" id="9763887at2"/>
<dbReference type="UniPathway" id="UPA00578">
    <property type="reaction ID" value="UER00638"/>
</dbReference>
<dbReference type="Proteomes" id="UP000001982">
    <property type="component" value="Chromosome"/>
</dbReference>
<dbReference type="GO" id="GO:0005829">
    <property type="term" value="C:cytosol"/>
    <property type="evidence" value="ECO:0007669"/>
    <property type="project" value="TreeGrafter"/>
</dbReference>
<dbReference type="GO" id="GO:0004645">
    <property type="term" value="F:1,4-alpha-oligoglucan phosphorylase activity"/>
    <property type="evidence" value="ECO:0007669"/>
    <property type="project" value="InterPro"/>
</dbReference>
<dbReference type="GO" id="GO:0009032">
    <property type="term" value="F:thymidine phosphorylase activity"/>
    <property type="evidence" value="ECO:0007669"/>
    <property type="project" value="UniProtKB-UniRule"/>
</dbReference>
<dbReference type="GO" id="GO:0006206">
    <property type="term" value="P:pyrimidine nucleobase metabolic process"/>
    <property type="evidence" value="ECO:0007669"/>
    <property type="project" value="InterPro"/>
</dbReference>
<dbReference type="GO" id="GO:0046104">
    <property type="term" value="P:thymidine metabolic process"/>
    <property type="evidence" value="ECO:0007669"/>
    <property type="project" value="UniProtKB-UniRule"/>
</dbReference>
<dbReference type="FunFam" id="3.40.1030.10:FF:000001">
    <property type="entry name" value="Thymidine phosphorylase"/>
    <property type="match status" value="1"/>
</dbReference>
<dbReference type="FunFam" id="3.90.1170.30:FF:000001">
    <property type="entry name" value="Thymidine phosphorylase"/>
    <property type="match status" value="1"/>
</dbReference>
<dbReference type="Gene3D" id="3.40.1030.10">
    <property type="entry name" value="Nucleoside phosphorylase/phosphoribosyltransferase catalytic domain"/>
    <property type="match status" value="1"/>
</dbReference>
<dbReference type="Gene3D" id="3.90.1170.30">
    <property type="entry name" value="Pyrimidine nucleoside phosphorylase-like, C-terminal domain"/>
    <property type="match status" value="1"/>
</dbReference>
<dbReference type="Gene3D" id="1.20.970.10">
    <property type="entry name" value="Transferase, Pyrimidine Nucleoside Phosphorylase, Chain C"/>
    <property type="match status" value="1"/>
</dbReference>
<dbReference type="HAMAP" id="MF_01628">
    <property type="entry name" value="Thymid_phosp"/>
    <property type="match status" value="1"/>
</dbReference>
<dbReference type="InterPro" id="IPR000312">
    <property type="entry name" value="Glycosyl_Trfase_fam3"/>
</dbReference>
<dbReference type="InterPro" id="IPR017459">
    <property type="entry name" value="Glycosyl_Trfase_fam3_N_dom"/>
</dbReference>
<dbReference type="InterPro" id="IPR036320">
    <property type="entry name" value="Glycosyl_Trfase_fam3_N_dom_sf"/>
</dbReference>
<dbReference type="InterPro" id="IPR035902">
    <property type="entry name" value="Nuc_phospho_transferase"/>
</dbReference>
<dbReference type="InterPro" id="IPR036566">
    <property type="entry name" value="PYNP-like_C_sf"/>
</dbReference>
<dbReference type="InterPro" id="IPR013102">
    <property type="entry name" value="PYNP_C"/>
</dbReference>
<dbReference type="InterPro" id="IPR018090">
    <property type="entry name" value="Pyrmidine_PPas_bac/euk"/>
</dbReference>
<dbReference type="InterPro" id="IPR017872">
    <property type="entry name" value="Pyrmidine_PPase_CS"/>
</dbReference>
<dbReference type="InterPro" id="IPR000053">
    <property type="entry name" value="Thymidine/pyrmidine_PPase"/>
</dbReference>
<dbReference type="InterPro" id="IPR013465">
    <property type="entry name" value="Thymidine_Pase"/>
</dbReference>
<dbReference type="NCBIfam" id="NF004490">
    <property type="entry name" value="PRK05820.1"/>
    <property type="match status" value="1"/>
</dbReference>
<dbReference type="NCBIfam" id="TIGR02643">
    <property type="entry name" value="T_phosphoryl"/>
    <property type="match status" value="1"/>
</dbReference>
<dbReference type="NCBIfam" id="TIGR02644">
    <property type="entry name" value="Y_phosphoryl"/>
    <property type="match status" value="1"/>
</dbReference>
<dbReference type="PANTHER" id="PTHR10515">
    <property type="entry name" value="THYMIDINE PHOSPHORYLASE"/>
    <property type="match status" value="1"/>
</dbReference>
<dbReference type="PANTHER" id="PTHR10515:SF0">
    <property type="entry name" value="THYMIDINE PHOSPHORYLASE"/>
    <property type="match status" value="1"/>
</dbReference>
<dbReference type="Pfam" id="PF02885">
    <property type="entry name" value="Glycos_trans_3N"/>
    <property type="match status" value="1"/>
</dbReference>
<dbReference type="Pfam" id="PF00591">
    <property type="entry name" value="Glycos_transf_3"/>
    <property type="match status" value="1"/>
</dbReference>
<dbReference type="Pfam" id="PF07831">
    <property type="entry name" value="PYNP_C"/>
    <property type="match status" value="1"/>
</dbReference>
<dbReference type="PIRSF" id="PIRSF000478">
    <property type="entry name" value="TP_PyNP"/>
    <property type="match status" value="1"/>
</dbReference>
<dbReference type="SMART" id="SM00941">
    <property type="entry name" value="PYNP_C"/>
    <property type="match status" value="1"/>
</dbReference>
<dbReference type="SUPFAM" id="SSF52418">
    <property type="entry name" value="Nucleoside phosphorylase/phosphoribosyltransferase catalytic domain"/>
    <property type="match status" value="1"/>
</dbReference>
<dbReference type="SUPFAM" id="SSF47648">
    <property type="entry name" value="Nucleoside phosphorylase/phosphoribosyltransferase N-terminal domain"/>
    <property type="match status" value="1"/>
</dbReference>
<dbReference type="SUPFAM" id="SSF54680">
    <property type="entry name" value="Pyrimidine nucleoside phosphorylase C-terminal domain"/>
    <property type="match status" value="1"/>
</dbReference>
<dbReference type="PROSITE" id="PS00647">
    <property type="entry name" value="THYMID_PHOSPHORYLASE"/>
    <property type="match status" value="1"/>
</dbReference>
<feature type="chain" id="PRO_1000069668" description="Thymidine phosphorylase">
    <location>
        <begin position="1"/>
        <end position="443"/>
    </location>
</feature>
<accession>Q12QG2</accession>
<evidence type="ECO:0000255" key="1">
    <source>
        <dbReference type="HAMAP-Rule" id="MF_01628"/>
    </source>
</evidence>
<gene>
    <name evidence="1" type="primary">deoA</name>
    <name type="ordered locus">Sden_1026</name>
</gene>
<reference key="1">
    <citation type="submission" date="2006-03" db="EMBL/GenBank/DDBJ databases">
        <title>Complete sequence of Shewanella denitrificans OS217.</title>
        <authorList>
            <consortium name="US DOE Joint Genome Institute"/>
            <person name="Copeland A."/>
            <person name="Lucas S."/>
            <person name="Lapidus A."/>
            <person name="Barry K."/>
            <person name="Detter J.C."/>
            <person name="Glavina del Rio T."/>
            <person name="Hammon N."/>
            <person name="Israni S."/>
            <person name="Dalin E."/>
            <person name="Tice H."/>
            <person name="Pitluck S."/>
            <person name="Brettin T."/>
            <person name="Bruce D."/>
            <person name="Han C."/>
            <person name="Tapia R."/>
            <person name="Gilna P."/>
            <person name="Kiss H."/>
            <person name="Schmutz J."/>
            <person name="Larimer F."/>
            <person name="Land M."/>
            <person name="Hauser L."/>
            <person name="Kyrpides N."/>
            <person name="Lykidis A."/>
            <person name="Richardson P."/>
        </authorList>
    </citation>
    <scope>NUCLEOTIDE SEQUENCE [LARGE SCALE GENOMIC DNA]</scope>
    <source>
        <strain>OS217 / ATCC BAA-1090 / DSM 15013</strain>
    </source>
</reference>
<sequence>MFLAQEIIRKKRNGQALTAAEIQFFVNGITTNSVSEGQIAAFGMAVYFNDMNMDERIALTIGMRDSGTVLNWDSLGLNGPVIDKHSTGGVGDVISLMLGPMAAACGGYVPMISGRGLGHTGGTLDKFDAILGYQTEPSSELFRKVVKEAGVAIIGQTGDLVPADKRFYSIRDNTATVESISLITASILSKKLAAGLDALVMDVKVGSGAFMPSYAASEELARSIAAVANGAGTKTTALLTDMNQVLASCAGNAVEVVEAINFLTGEYRNPRLYEVTMGLCAEMLVLGGIAQNEIEARTKLNTVLDNGKAAEVFGKMIAGLGGPTDFIEAYDKYLPQAKIIRPVFSDAQGYAHSMDTRELGLAVVTLGGGRRKPGDKLDYSVGLTQVCALGEQISTDKPIAMIHAQTEDDFLEAELAVKNAIKIQSSMPEKMPEIYRYIRAADL</sequence>
<proteinExistence type="inferred from homology"/>